<accession>B9DV80</accession>
<dbReference type="EC" id="2.7.2.11" evidence="1"/>
<dbReference type="EMBL" id="AM946015">
    <property type="protein sequence ID" value="CAR43083.1"/>
    <property type="molecule type" value="Genomic_DNA"/>
</dbReference>
<dbReference type="RefSeq" id="WP_015911743.1">
    <property type="nucleotide sequence ID" value="NC_012004.1"/>
</dbReference>
<dbReference type="SMR" id="B9DV80"/>
<dbReference type="STRING" id="218495.SUB1423"/>
<dbReference type="KEGG" id="sub:SUB1423"/>
<dbReference type="eggNOG" id="COG0263">
    <property type="taxonomic scope" value="Bacteria"/>
</dbReference>
<dbReference type="HOGENOM" id="CLU_025400_0_2_9"/>
<dbReference type="OrthoDB" id="9804434at2"/>
<dbReference type="UniPathway" id="UPA00098">
    <property type="reaction ID" value="UER00359"/>
</dbReference>
<dbReference type="Proteomes" id="UP000000449">
    <property type="component" value="Chromosome"/>
</dbReference>
<dbReference type="GO" id="GO:0005829">
    <property type="term" value="C:cytosol"/>
    <property type="evidence" value="ECO:0007669"/>
    <property type="project" value="TreeGrafter"/>
</dbReference>
<dbReference type="GO" id="GO:0005524">
    <property type="term" value="F:ATP binding"/>
    <property type="evidence" value="ECO:0007669"/>
    <property type="project" value="UniProtKB-KW"/>
</dbReference>
<dbReference type="GO" id="GO:0004349">
    <property type="term" value="F:glutamate 5-kinase activity"/>
    <property type="evidence" value="ECO:0007669"/>
    <property type="project" value="UniProtKB-UniRule"/>
</dbReference>
<dbReference type="GO" id="GO:0055129">
    <property type="term" value="P:L-proline biosynthetic process"/>
    <property type="evidence" value="ECO:0007669"/>
    <property type="project" value="UniProtKB-UniRule"/>
</dbReference>
<dbReference type="CDD" id="cd04242">
    <property type="entry name" value="AAK_G5K_ProB"/>
    <property type="match status" value="1"/>
</dbReference>
<dbReference type="FunFam" id="3.40.1160.10:FF:000018">
    <property type="entry name" value="Glutamate 5-kinase"/>
    <property type="match status" value="1"/>
</dbReference>
<dbReference type="Gene3D" id="3.40.1160.10">
    <property type="entry name" value="Acetylglutamate kinase-like"/>
    <property type="match status" value="1"/>
</dbReference>
<dbReference type="HAMAP" id="MF_00456">
    <property type="entry name" value="ProB"/>
    <property type="match status" value="1"/>
</dbReference>
<dbReference type="InterPro" id="IPR036393">
    <property type="entry name" value="AceGlu_kinase-like_sf"/>
</dbReference>
<dbReference type="InterPro" id="IPR001048">
    <property type="entry name" value="Asp/Glu/Uridylate_kinase"/>
</dbReference>
<dbReference type="InterPro" id="IPR041739">
    <property type="entry name" value="G5K_ProB"/>
</dbReference>
<dbReference type="InterPro" id="IPR001057">
    <property type="entry name" value="Glu/AcGlu_kinase"/>
</dbReference>
<dbReference type="InterPro" id="IPR011529">
    <property type="entry name" value="Glu_5kinase"/>
</dbReference>
<dbReference type="InterPro" id="IPR005715">
    <property type="entry name" value="Glu_5kinase/COase_Synthase"/>
</dbReference>
<dbReference type="InterPro" id="IPR019797">
    <property type="entry name" value="Glutamate_5-kinase_CS"/>
</dbReference>
<dbReference type="NCBIfam" id="TIGR01027">
    <property type="entry name" value="proB"/>
    <property type="match status" value="1"/>
</dbReference>
<dbReference type="PANTHER" id="PTHR43654">
    <property type="entry name" value="GLUTAMATE 5-KINASE"/>
    <property type="match status" value="1"/>
</dbReference>
<dbReference type="PANTHER" id="PTHR43654:SF1">
    <property type="entry name" value="ISOPENTENYL PHOSPHATE KINASE"/>
    <property type="match status" value="1"/>
</dbReference>
<dbReference type="Pfam" id="PF00696">
    <property type="entry name" value="AA_kinase"/>
    <property type="match status" value="1"/>
</dbReference>
<dbReference type="PIRSF" id="PIRSF000729">
    <property type="entry name" value="GK"/>
    <property type="match status" value="1"/>
</dbReference>
<dbReference type="PRINTS" id="PR00474">
    <property type="entry name" value="GLU5KINASE"/>
</dbReference>
<dbReference type="SUPFAM" id="SSF53633">
    <property type="entry name" value="Carbamate kinase-like"/>
    <property type="match status" value="1"/>
</dbReference>
<dbReference type="PROSITE" id="PS00902">
    <property type="entry name" value="GLUTAMATE_5_KINASE"/>
    <property type="match status" value="1"/>
</dbReference>
<keyword id="KW-0028">Amino-acid biosynthesis</keyword>
<keyword id="KW-0067">ATP-binding</keyword>
<keyword id="KW-0963">Cytoplasm</keyword>
<keyword id="KW-0418">Kinase</keyword>
<keyword id="KW-0547">Nucleotide-binding</keyword>
<keyword id="KW-0641">Proline biosynthesis</keyword>
<keyword id="KW-1185">Reference proteome</keyword>
<keyword id="KW-0808">Transferase</keyword>
<proteinExistence type="inferred from homology"/>
<reference key="1">
    <citation type="journal article" date="2009" name="BMC Genomics">
        <title>Evidence for niche adaptation in the genome of the bovine pathogen Streptococcus uberis.</title>
        <authorList>
            <person name="Ward P.N."/>
            <person name="Holden M.T.G."/>
            <person name="Leigh J.A."/>
            <person name="Lennard N."/>
            <person name="Bignell A."/>
            <person name="Barron A."/>
            <person name="Clark L."/>
            <person name="Quail M.A."/>
            <person name="Woodward J."/>
            <person name="Barrell B.G."/>
            <person name="Egan S.A."/>
            <person name="Field T.R."/>
            <person name="Maskell D."/>
            <person name="Kehoe M."/>
            <person name="Dowson C.G."/>
            <person name="Chanter N."/>
            <person name="Whatmore A.M."/>
            <person name="Bentley S.D."/>
            <person name="Parkhill J."/>
        </authorList>
    </citation>
    <scope>NUCLEOTIDE SEQUENCE [LARGE SCALE GENOMIC DNA]</scope>
    <source>
        <strain>ATCC BAA-854 / 0140J</strain>
    </source>
</reference>
<comment type="function">
    <text evidence="1">Catalyzes the transfer of a phosphate group to glutamate to form L-glutamate 5-phosphate.</text>
</comment>
<comment type="catalytic activity">
    <reaction evidence="1">
        <text>L-glutamate + ATP = L-glutamyl 5-phosphate + ADP</text>
        <dbReference type="Rhea" id="RHEA:14877"/>
        <dbReference type="ChEBI" id="CHEBI:29985"/>
        <dbReference type="ChEBI" id="CHEBI:30616"/>
        <dbReference type="ChEBI" id="CHEBI:58274"/>
        <dbReference type="ChEBI" id="CHEBI:456216"/>
        <dbReference type="EC" id="2.7.2.11"/>
    </reaction>
</comment>
<comment type="pathway">
    <text evidence="1">Amino-acid biosynthesis; L-proline biosynthesis; L-glutamate 5-semialdehyde from L-glutamate: step 1/2.</text>
</comment>
<comment type="subcellular location">
    <subcellularLocation>
        <location evidence="1">Cytoplasm</location>
    </subcellularLocation>
</comment>
<comment type="similarity">
    <text evidence="1">Belongs to the glutamate 5-kinase family.</text>
</comment>
<name>PROB_STRU0</name>
<feature type="chain" id="PRO_1000193709" description="Glutamate 5-kinase">
    <location>
        <begin position="1"/>
        <end position="270"/>
    </location>
</feature>
<feature type="binding site" evidence="1">
    <location>
        <position position="15"/>
    </location>
    <ligand>
        <name>ATP</name>
        <dbReference type="ChEBI" id="CHEBI:30616"/>
    </ligand>
</feature>
<feature type="binding site" evidence="1">
    <location>
        <position position="55"/>
    </location>
    <ligand>
        <name>substrate</name>
    </ligand>
</feature>
<feature type="binding site" evidence="1">
    <location>
        <position position="142"/>
    </location>
    <ligand>
        <name>substrate</name>
    </ligand>
</feature>
<feature type="binding site" evidence="1">
    <location>
        <position position="158"/>
    </location>
    <ligand>
        <name>substrate</name>
    </ligand>
</feature>
<feature type="binding site" evidence="1">
    <location>
        <begin position="178"/>
        <end position="179"/>
    </location>
    <ligand>
        <name>ATP</name>
        <dbReference type="ChEBI" id="CHEBI:30616"/>
    </ligand>
</feature>
<feature type="binding site" evidence="1">
    <location>
        <begin position="220"/>
        <end position="226"/>
    </location>
    <ligand>
        <name>ATP</name>
        <dbReference type="ChEBI" id="CHEBI:30616"/>
    </ligand>
</feature>
<evidence type="ECO:0000255" key="1">
    <source>
        <dbReference type="HAMAP-Rule" id="MF_00456"/>
    </source>
</evidence>
<organism>
    <name type="scientific">Streptococcus uberis (strain ATCC BAA-854 / 0140J)</name>
    <dbReference type="NCBI Taxonomy" id="218495"/>
    <lineage>
        <taxon>Bacteria</taxon>
        <taxon>Bacillati</taxon>
        <taxon>Bacillota</taxon>
        <taxon>Bacilli</taxon>
        <taxon>Lactobacillales</taxon>
        <taxon>Streptococcaceae</taxon>
        <taxon>Streptococcus</taxon>
    </lineage>
</organism>
<sequence>MMKRNFDQVKRIVIKIGTSSLVQENGKINLEKIDQLAFVMSSLKNKGKDLILVSSGAMGFGLDILKMDKRPSDLAKQQAVSSVGQVAMMSLYSQIFSHYQTNVSQILLTRDVVIFPESLANVTNAFESLMAMGIVPIVNENDAVSVDEMDHATKFGDNDRLSAVVAEITKADLLIMLSDIDGLYDKNPTIYEDAQLRSIVTEITDEIIKSAGGAGSKFGTGGMLSKIQSAQMVFANNGQMVLMNGKNPRDILRVLEGKEIGTWFVQEKGN</sequence>
<gene>
    <name evidence="1" type="primary">proB</name>
    <name type="ordered locus">SUB1423</name>
</gene>
<protein>
    <recommendedName>
        <fullName evidence="1">Glutamate 5-kinase</fullName>
        <ecNumber evidence="1">2.7.2.11</ecNumber>
    </recommendedName>
    <alternativeName>
        <fullName evidence="1">Gamma-glutamyl kinase</fullName>
        <shortName evidence="1">GK</shortName>
    </alternativeName>
</protein>